<accession>Q8BGA9</accession>
<accession>Q8BK01</accession>
<accession>Q8R091</accession>
<accession>Q9D8X7</accession>
<dbReference type="EMBL" id="AK007567">
    <property type="protein sequence ID" value="BAB25113.1"/>
    <property type="molecule type" value="mRNA"/>
</dbReference>
<dbReference type="EMBL" id="AK044817">
    <property type="protein sequence ID" value="BAC32104.1"/>
    <property type="molecule type" value="mRNA"/>
</dbReference>
<dbReference type="EMBL" id="AK052432">
    <property type="protein sequence ID" value="BAC34985.1"/>
    <property type="molecule type" value="mRNA"/>
</dbReference>
<dbReference type="EMBL" id="AK077624">
    <property type="protein sequence ID" value="BAC36908.1"/>
    <property type="molecule type" value="mRNA"/>
</dbReference>
<dbReference type="EMBL" id="BC027191">
    <property type="protein sequence ID" value="AAH27191.1"/>
    <property type="molecule type" value="mRNA"/>
</dbReference>
<dbReference type="CCDS" id="CCDS27086.1"/>
<dbReference type="RefSeq" id="NP_081212.1">
    <property type="nucleotide sequence ID" value="NM_026936.4"/>
</dbReference>
<dbReference type="SMR" id="Q8BGA9"/>
<dbReference type="BioGRID" id="213221">
    <property type="interactions" value="5"/>
</dbReference>
<dbReference type="FunCoup" id="Q8BGA9">
    <property type="interactions" value="2328"/>
</dbReference>
<dbReference type="STRING" id="10090.ENSMUSP00000000985"/>
<dbReference type="iPTMnet" id="Q8BGA9"/>
<dbReference type="PhosphoSitePlus" id="Q8BGA9"/>
<dbReference type="SwissPalm" id="Q8BGA9"/>
<dbReference type="jPOST" id="Q8BGA9"/>
<dbReference type="PaxDb" id="10090-ENSMUSP00000000985"/>
<dbReference type="ProteomicsDB" id="295493"/>
<dbReference type="Pumba" id="Q8BGA9"/>
<dbReference type="Antibodypedia" id="192">
    <property type="antibodies" value="194 antibodies from 26 providers"/>
</dbReference>
<dbReference type="DNASU" id="69089"/>
<dbReference type="Ensembl" id="ENSMUST00000000985.7">
    <property type="protein sequence ID" value="ENSMUSP00000000985.6"/>
    <property type="gene ID" value="ENSMUSG00000000959.8"/>
</dbReference>
<dbReference type="GeneID" id="69089"/>
<dbReference type="KEGG" id="mmu:69089"/>
<dbReference type="UCSC" id="uc007tvu.1">
    <property type="organism name" value="mouse"/>
</dbReference>
<dbReference type="AGR" id="MGI:1916339"/>
<dbReference type="CTD" id="5018"/>
<dbReference type="MGI" id="MGI:1916339">
    <property type="gene designation" value="Oxa1l"/>
</dbReference>
<dbReference type="VEuPathDB" id="HostDB:ENSMUSG00000000959"/>
<dbReference type="eggNOG" id="KOG1239">
    <property type="taxonomic scope" value="Eukaryota"/>
</dbReference>
<dbReference type="GeneTree" id="ENSGT00530000063506"/>
<dbReference type="HOGENOM" id="CLU_029282_3_1_1"/>
<dbReference type="InParanoid" id="Q8BGA9"/>
<dbReference type="OMA" id="GWKNAQT"/>
<dbReference type="OrthoDB" id="2148490at2759"/>
<dbReference type="PhylomeDB" id="Q8BGA9"/>
<dbReference type="TreeFam" id="TF354324"/>
<dbReference type="Reactome" id="R-MMU-5389840">
    <property type="pathway name" value="Mitochondrial translation elongation"/>
</dbReference>
<dbReference type="Reactome" id="R-MMU-5419276">
    <property type="pathway name" value="Mitochondrial translation termination"/>
</dbReference>
<dbReference type="BioGRID-ORCS" id="69089">
    <property type="hits" value="20 hits in 79 CRISPR screens"/>
</dbReference>
<dbReference type="ChiTaRS" id="Oxa1l">
    <property type="organism name" value="mouse"/>
</dbReference>
<dbReference type="PRO" id="PR:Q8BGA9"/>
<dbReference type="Proteomes" id="UP000000589">
    <property type="component" value="Chromosome 14"/>
</dbReference>
<dbReference type="RNAct" id="Q8BGA9">
    <property type="molecule type" value="protein"/>
</dbReference>
<dbReference type="Bgee" id="ENSMUSG00000000959">
    <property type="expression patterns" value="Expressed in hindlimb stylopod muscle and 251 other cell types or tissues"/>
</dbReference>
<dbReference type="ExpressionAtlas" id="Q8BGA9">
    <property type="expression patterns" value="baseline and differential"/>
</dbReference>
<dbReference type="GO" id="GO:0005743">
    <property type="term" value="C:mitochondrial inner membrane"/>
    <property type="evidence" value="ECO:0007005"/>
    <property type="project" value="MGI"/>
</dbReference>
<dbReference type="GO" id="GO:0031966">
    <property type="term" value="C:mitochondrial membrane"/>
    <property type="evidence" value="ECO:0000250"/>
    <property type="project" value="UniProtKB"/>
</dbReference>
<dbReference type="GO" id="GO:0005739">
    <property type="term" value="C:mitochondrion"/>
    <property type="evidence" value="ECO:0007005"/>
    <property type="project" value="MGI"/>
</dbReference>
<dbReference type="GO" id="GO:0032991">
    <property type="term" value="C:protein-containing complex"/>
    <property type="evidence" value="ECO:0007669"/>
    <property type="project" value="Ensembl"/>
</dbReference>
<dbReference type="GO" id="GO:0032977">
    <property type="term" value="F:membrane insertase activity"/>
    <property type="evidence" value="ECO:0000250"/>
    <property type="project" value="UniProtKB"/>
</dbReference>
<dbReference type="GO" id="GO:0097177">
    <property type="term" value="F:mitochondrial ribosome binding"/>
    <property type="evidence" value="ECO:0000250"/>
    <property type="project" value="UniProtKB"/>
</dbReference>
<dbReference type="GO" id="GO:0042803">
    <property type="term" value="F:protein homodimerization activity"/>
    <property type="evidence" value="ECO:0000250"/>
    <property type="project" value="UniProtKB"/>
</dbReference>
<dbReference type="GO" id="GO:0009060">
    <property type="term" value="P:aerobic respiration"/>
    <property type="evidence" value="ECO:0007669"/>
    <property type="project" value="Ensembl"/>
</dbReference>
<dbReference type="GO" id="GO:0141164">
    <property type="term" value="P:mitochondrial protein quality control"/>
    <property type="evidence" value="ECO:0000250"/>
    <property type="project" value="UniProtKB"/>
</dbReference>
<dbReference type="GO" id="GO:0033615">
    <property type="term" value="P:mitochondrial proton-transporting ATP synthase complex assembly"/>
    <property type="evidence" value="ECO:0007669"/>
    <property type="project" value="Ensembl"/>
</dbReference>
<dbReference type="GO" id="GO:0032981">
    <property type="term" value="P:mitochondrial respiratory chain complex I assembly"/>
    <property type="evidence" value="ECO:0000250"/>
    <property type="project" value="UniProtKB"/>
</dbReference>
<dbReference type="GO" id="GO:0032979">
    <property type="term" value="P:protein insertion into mitochondrial inner membrane from matrix"/>
    <property type="evidence" value="ECO:0000250"/>
    <property type="project" value="UniProtKB"/>
</dbReference>
<dbReference type="GO" id="GO:0051262">
    <property type="term" value="P:protein tetramerization"/>
    <property type="evidence" value="ECO:0000250"/>
    <property type="project" value="UniProtKB"/>
</dbReference>
<dbReference type="CDD" id="cd20069">
    <property type="entry name" value="5TM_Oxa1-like"/>
    <property type="match status" value="1"/>
</dbReference>
<dbReference type="InterPro" id="IPR001708">
    <property type="entry name" value="YidC/ALB3/OXA1/COX18"/>
</dbReference>
<dbReference type="InterPro" id="IPR028055">
    <property type="entry name" value="YidC/Oxa/ALB_C"/>
</dbReference>
<dbReference type="NCBIfam" id="TIGR03592">
    <property type="entry name" value="yidC_oxa1_cterm"/>
    <property type="match status" value="1"/>
</dbReference>
<dbReference type="PANTHER" id="PTHR12428:SF66">
    <property type="entry name" value="MITOCHONDRIAL INNER MEMBRANE PROTEIN OXA1L"/>
    <property type="match status" value="1"/>
</dbReference>
<dbReference type="PANTHER" id="PTHR12428">
    <property type="entry name" value="OXA1"/>
    <property type="match status" value="1"/>
</dbReference>
<dbReference type="Pfam" id="PF02096">
    <property type="entry name" value="60KD_IMP"/>
    <property type="match status" value="1"/>
</dbReference>
<sequence>MARNLVCGRWQLLRLLRPQRSYHSVAVSLRPLAAELLAARRGNGRPPCALLAVFTPRCISTSATLFAEAQVQAPPVIPATSIPAAVPEVASGGAADVVQCATEPSFTELGLGSYTPVGLIQNLLEYIHVDLGLPWWGAIATCTVLARCLVFPLIVKGQREAAKIHNHMPEMQKFSARIREAKLAGDQAEFYKATIEMTRYQKKHDIKLLRPLILPLTQAPVFISFFIALREMANLPVPSLQTGGLWWFQDLTVSDPIYVLPLVVTATMWCVLELGAETGVQSNDLQFMRNIIRVMPLVVLPVTIHFPSAVFMYWLSSNVFSLCQVACLRIPAVRTVLKIPQRVVHDPDKLPPREGFLKSFKKGWKNAEIAQQLREREQRMQKHLDLAARGPLRQTFTHNPLLQHDPSHPPKAPNSNNSSIKANAKKPWQDTLG</sequence>
<proteinExistence type="evidence at protein level"/>
<feature type="transit peptide" description="Mitochondrion" evidence="2">
    <location>
        <begin position="1"/>
        <end status="unknown"/>
    </location>
</feature>
<feature type="chain" id="PRO_0000020353" description="Mitochondrial inner membrane protein OXA1L">
    <location>
        <begin status="unknown"/>
        <end position="433"/>
    </location>
</feature>
<feature type="topological domain" description="Mitochondrial intermembrane" evidence="2">
    <location>
        <begin position="1"/>
        <end position="108"/>
    </location>
</feature>
<feature type="transmembrane region" description="Helical" evidence="2">
    <location>
        <begin position="109"/>
        <end position="129"/>
    </location>
</feature>
<feature type="topological domain" description="Mitochondrial matrix" evidence="2">
    <location>
        <begin position="130"/>
        <end position="134"/>
    </location>
</feature>
<feature type="transmembrane region" description="Helical" evidence="2">
    <location>
        <begin position="135"/>
        <end position="155"/>
    </location>
</feature>
<feature type="topological domain" description="Mitochondrial intermembrane" evidence="2">
    <location>
        <begin position="156"/>
        <end position="207"/>
    </location>
</feature>
<feature type="transmembrane region" description="Helical" evidence="2">
    <location>
        <begin position="208"/>
        <end position="228"/>
    </location>
</feature>
<feature type="topological domain" description="Mitochondrial matrix" evidence="2">
    <location>
        <begin position="229"/>
        <end position="255"/>
    </location>
</feature>
<feature type="transmembrane region" description="Helical" evidence="2">
    <location>
        <begin position="256"/>
        <end position="276"/>
    </location>
</feature>
<feature type="topological domain" description="Mitochondrial intermembrane" evidence="2">
    <location>
        <begin position="277"/>
        <end position="293"/>
    </location>
</feature>
<feature type="transmembrane region" description="Helical" evidence="2">
    <location>
        <begin position="294"/>
        <end position="314"/>
    </location>
</feature>
<feature type="topological domain" description="Mitochondrial matrix" evidence="2">
    <location>
        <begin position="315"/>
        <end position="433"/>
    </location>
</feature>
<feature type="region of interest" description="Disordered" evidence="3">
    <location>
        <begin position="397"/>
        <end position="433"/>
    </location>
</feature>
<feature type="compositionally biased region" description="Low complexity" evidence="3">
    <location>
        <begin position="413"/>
        <end position="426"/>
    </location>
</feature>
<feature type="modified residue" description="Phosphoserine" evidence="1">
    <location>
        <position position="359"/>
    </location>
</feature>
<feature type="modified residue" description="Phosphothreonine" evidence="1">
    <location>
        <position position="395"/>
    </location>
</feature>
<feature type="modified residue" description="Phosphothreonine" evidence="1">
    <location>
        <position position="397"/>
    </location>
</feature>
<feature type="sequence conflict" description="In Ref. 2; AAH27191." evidence="4" ref="2">
    <original>P</original>
    <variation>L</variation>
    <location>
        <position position="18"/>
    </location>
</feature>
<feature type="sequence conflict" description="In Ref. 2; AAH27191." evidence="4" ref="2">
    <original>G</original>
    <variation>S</variation>
    <location>
        <position position="42"/>
    </location>
</feature>
<feature type="sequence conflict" description="In Ref. 2; AAH27191." evidence="4" ref="2">
    <original>C</original>
    <variation>Y</variation>
    <location>
        <position position="48"/>
    </location>
</feature>
<feature type="sequence conflict" description="In Ref. 2; AAH27191." evidence="4" ref="2">
    <original>I</original>
    <variation>V</variation>
    <location>
        <position position="77"/>
    </location>
</feature>
<feature type="sequence conflict" description="In Ref. 2; AAH27191." evidence="4" ref="2">
    <original>P</original>
    <variation>L</variation>
    <location>
        <position position="104"/>
    </location>
</feature>
<feature type="sequence conflict" description="In Ref. 2; AAH27191." evidence="4" ref="2">
    <location>
        <begin position="109"/>
        <end position="130"/>
    </location>
</feature>
<feature type="sequence conflict" description="In Ref. 1; BAB25113." evidence="4" ref="1">
    <original>Q</original>
    <variation>H</variation>
    <location>
        <position position="218"/>
    </location>
</feature>
<feature type="sequence conflict" description="In Ref. 1; BAC36908." evidence="4" ref="1">
    <original>G</original>
    <variation>D</variation>
    <location>
        <position position="275"/>
    </location>
</feature>
<keyword id="KW-0472">Membrane</keyword>
<keyword id="KW-0496">Mitochondrion</keyword>
<keyword id="KW-0999">Mitochondrion inner membrane</keyword>
<keyword id="KW-0597">Phosphoprotein</keyword>
<keyword id="KW-1185">Reference proteome</keyword>
<keyword id="KW-0809">Transit peptide</keyword>
<keyword id="KW-0812">Transmembrane</keyword>
<keyword id="KW-1133">Transmembrane helix</keyword>
<comment type="function">
    <text evidence="1">Mitochondrial membrane insertase that mediates the cotranslational insertion of integral membrane proteins into the mitochondrial inner membrane. Essential for the activity and assembly of cytochrome oxidase. Required for the correct biogenesis of ATP synthase and complex I in mitochondria.</text>
</comment>
<comment type="subunit">
    <text evidence="1">Monomer; predominantly monomeric at low salt concentrations. Homooligomer; predominantly homooligomeric at high salt concentrations. Associates with the mitochondrial ribosome. Associates preferentially as a dimer with the large ribosomal subunit 39S of the mitochondrial ribosome. Interacts with OXA1L; promoting cotranslational quality control in mitochondria.</text>
</comment>
<comment type="subcellular location">
    <subcellularLocation>
        <location evidence="1">Mitochondrion inner membrane</location>
        <topology evidence="1">Multi-pass membrane protein</topology>
    </subcellularLocation>
</comment>
<comment type="similarity">
    <text evidence="4">Belongs to the OXA1/ALB3/YidC family.</text>
</comment>
<reference key="1">
    <citation type="journal article" date="2005" name="Science">
        <title>The transcriptional landscape of the mammalian genome.</title>
        <authorList>
            <person name="Carninci P."/>
            <person name="Kasukawa T."/>
            <person name="Katayama S."/>
            <person name="Gough J."/>
            <person name="Frith M.C."/>
            <person name="Maeda N."/>
            <person name="Oyama R."/>
            <person name="Ravasi T."/>
            <person name="Lenhard B."/>
            <person name="Wells C."/>
            <person name="Kodzius R."/>
            <person name="Shimokawa K."/>
            <person name="Bajic V.B."/>
            <person name="Brenner S.E."/>
            <person name="Batalov S."/>
            <person name="Forrest A.R."/>
            <person name="Zavolan M."/>
            <person name="Davis M.J."/>
            <person name="Wilming L.G."/>
            <person name="Aidinis V."/>
            <person name="Allen J.E."/>
            <person name="Ambesi-Impiombato A."/>
            <person name="Apweiler R."/>
            <person name="Aturaliya R.N."/>
            <person name="Bailey T.L."/>
            <person name="Bansal M."/>
            <person name="Baxter L."/>
            <person name="Beisel K.W."/>
            <person name="Bersano T."/>
            <person name="Bono H."/>
            <person name="Chalk A.M."/>
            <person name="Chiu K.P."/>
            <person name="Choudhary V."/>
            <person name="Christoffels A."/>
            <person name="Clutterbuck D.R."/>
            <person name="Crowe M.L."/>
            <person name="Dalla E."/>
            <person name="Dalrymple B.P."/>
            <person name="de Bono B."/>
            <person name="Della Gatta G."/>
            <person name="di Bernardo D."/>
            <person name="Down T."/>
            <person name="Engstrom P."/>
            <person name="Fagiolini M."/>
            <person name="Faulkner G."/>
            <person name="Fletcher C.F."/>
            <person name="Fukushima T."/>
            <person name="Furuno M."/>
            <person name="Futaki S."/>
            <person name="Gariboldi M."/>
            <person name="Georgii-Hemming P."/>
            <person name="Gingeras T.R."/>
            <person name="Gojobori T."/>
            <person name="Green R.E."/>
            <person name="Gustincich S."/>
            <person name="Harbers M."/>
            <person name="Hayashi Y."/>
            <person name="Hensch T.K."/>
            <person name="Hirokawa N."/>
            <person name="Hill D."/>
            <person name="Huminiecki L."/>
            <person name="Iacono M."/>
            <person name="Ikeo K."/>
            <person name="Iwama A."/>
            <person name="Ishikawa T."/>
            <person name="Jakt M."/>
            <person name="Kanapin A."/>
            <person name="Katoh M."/>
            <person name="Kawasawa Y."/>
            <person name="Kelso J."/>
            <person name="Kitamura H."/>
            <person name="Kitano H."/>
            <person name="Kollias G."/>
            <person name="Krishnan S.P."/>
            <person name="Kruger A."/>
            <person name="Kummerfeld S.K."/>
            <person name="Kurochkin I.V."/>
            <person name="Lareau L.F."/>
            <person name="Lazarevic D."/>
            <person name="Lipovich L."/>
            <person name="Liu J."/>
            <person name="Liuni S."/>
            <person name="McWilliam S."/>
            <person name="Madan Babu M."/>
            <person name="Madera M."/>
            <person name="Marchionni L."/>
            <person name="Matsuda H."/>
            <person name="Matsuzawa S."/>
            <person name="Miki H."/>
            <person name="Mignone F."/>
            <person name="Miyake S."/>
            <person name="Morris K."/>
            <person name="Mottagui-Tabar S."/>
            <person name="Mulder N."/>
            <person name="Nakano N."/>
            <person name="Nakauchi H."/>
            <person name="Ng P."/>
            <person name="Nilsson R."/>
            <person name="Nishiguchi S."/>
            <person name="Nishikawa S."/>
            <person name="Nori F."/>
            <person name="Ohara O."/>
            <person name="Okazaki Y."/>
            <person name="Orlando V."/>
            <person name="Pang K.C."/>
            <person name="Pavan W.J."/>
            <person name="Pavesi G."/>
            <person name="Pesole G."/>
            <person name="Petrovsky N."/>
            <person name="Piazza S."/>
            <person name="Reed J."/>
            <person name="Reid J.F."/>
            <person name="Ring B.Z."/>
            <person name="Ringwald M."/>
            <person name="Rost B."/>
            <person name="Ruan Y."/>
            <person name="Salzberg S.L."/>
            <person name="Sandelin A."/>
            <person name="Schneider C."/>
            <person name="Schoenbach C."/>
            <person name="Sekiguchi K."/>
            <person name="Semple C.A."/>
            <person name="Seno S."/>
            <person name="Sessa L."/>
            <person name="Sheng Y."/>
            <person name="Shibata Y."/>
            <person name="Shimada H."/>
            <person name="Shimada K."/>
            <person name="Silva D."/>
            <person name="Sinclair B."/>
            <person name="Sperling S."/>
            <person name="Stupka E."/>
            <person name="Sugiura K."/>
            <person name="Sultana R."/>
            <person name="Takenaka Y."/>
            <person name="Taki K."/>
            <person name="Tammoja K."/>
            <person name="Tan S.L."/>
            <person name="Tang S."/>
            <person name="Taylor M.S."/>
            <person name="Tegner J."/>
            <person name="Teichmann S.A."/>
            <person name="Ueda H.R."/>
            <person name="van Nimwegen E."/>
            <person name="Verardo R."/>
            <person name="Wei C.L."/>
            <person name="Yagi K."/>
            <person name="Yamanishi H."/>
            <person name="Zabarovsky E."/>
            <person name="Zhu S."/>
            <person name="Zimmer A."/>
            <person name="Hide W."/>
            <person name="Bult C."/>
            <person name="Grimmond S.M."/>
            <person name="Teasdale R.D."/>
            <person name="Liu E.T."/>
            <person name="Brusic V."/>
            <person name="Quackenbush J."/>
            <person name="Wahlestedt C."/>
            <person name="Mattick J.S."/>
            <person name="Hume D.A."/>
            <person name="Kai C."/>
            <person name="Sasaki D."/>
            <person name="Tomaru Y."/>
            <person name="Fukuda S."/>
            <person name="Kanamori-Katayama M."/>
            <person name="Suzuki M."/>
            <person name="Aoki J."/>
            <person name="Arakawa T."/>
            <person name="Iida J."/>
            <person name="Imamura K."/>
            <person name="Itoh M."/>
            <person name="Kato T."/>
            <person name="Kawaji H."/>
            <person name="Kawagashira N."/>
            <person name="Kawashima T."/>
            <person name="Kojima M."/>
            <person name="Kondo S."/>
            <person name="Konno H."/>
            <person name="Nakano K."/>
            <person name="Ninomiya N."/>
            <person name="Nishio T."/>
            <person name="Okada M."/>
            <person name="Plessy C."/>
            <person name="Shibata K."/>
            <person name="Shiraki T."/>
            <person name="Suzuki S."/>
            <person name="Tagami M."/>
            <person name="Waki K."/>
            <person name="Watahiki A."/>
            <person name="Okamura-Oho Y."/>
            <person name="Suzuki H."/>
            <person name="Kawai J."/>
            <person name="Hayashizaki Y."/>
        </authorList>
    </citation>
    <scope>NUCLEOTIDE SEQUENCE [LARGE SCALE MRNA]</scope>
    <source>
        <strain>C57BL/6J</strain>
        <tissue>Embryo</tissue>
        <tissue>Lung</tissue>
        <tissue>Pancreas</tissue>
    </source>
</reference>
<reference key="2">
    <citation type="journal article" date="2004" name="Genome Res.">
        <title>The status, quality, and expansion of the NIH full-length cDNA project: the Mammalian Gene Collection (MGC).</title>
        <authorList>
            <consortium name="The MGC Project Team"/>
        </authorList>
    </citation>
    <scope>NUCLEOTIDE SEQUENCE [LARGE SCALE MRNA]</scope>
    <source>
        <tissue>Kidney</tissue>
    </source>
</reference>
<reference key="3">
    <citation type="journal article" date="2010" name="Cell">
        <title>A tissue-specific atlas of mouse protein phosphorylation and expression.</title>
        <authorList>
            <person name="Huttlin E.L."/>
            <person name="Jedrychowski M.P."/>
            <person name="Elias J.E."/>
            <person name="Goswami T."/>
            <person name="Rad R."/>
            <person name="Beausoleil S.A."/>
            <person name="Villen J."/>
            <person name="Haas W."/>
            <person name="Sowa M.E."/>
            <person name="Gygi S.P."/>
        </authorList>
    </citation>
    <scope>IDENTIFICATION BY MASS SPECTROMETRY [LARGE SCALE ANALYSIS]</scope>
    <source>
        <tissue>Brown adipose tissue</tissue>
    </source>
</reference>
<organism>
    <name type="scientific">Mus musculus</name>
    <name type="common">Mouse</name>
    <dbReference type="NCBI Taxonomy" id="10090"/>
    <lineage>
        <taxon>Eukaryota</taxon>
        <taxon>Metazoa</taxon>
        <taxon>Chordata</taxon>
        <taxon>Craniata</taxon>
        <taxon>Vertebrata</taxon>
        <taxon>Euteleostomi</taxon>
        <taxon>Mammalia</taxon>
        <taxon>Eutheria</taxon>
        <taxon>Euarchontoglires</taxon>
        <taxon>Glires</taxon>
        <taxon>Rodentia</taxon>
        <taxon>Myomorpha</taxon>
        <taxon>Muroidea</taxon>
        <taxon>Muridae</taxon>
        <taxon>Murinae</taxon>
        <taxon>Mus</taxon>
        <taxon>Mus</taxon>
    </lineage>
</organism>
<protein>
    <recommendedName>
        <fullName>Mitochondrial inner membrane protein OXA1L</fullName>
    </recommendedName>
    <alternativeName>
        <fullName>Oxidase assembly 1-like protein</fullName>
        <shortName>OXA1-like protein</shortName>
    </alternativeName>
</protein>
<evidence type="ECO:0000250" key="1">
    <source>
        <dbReference type="UniProtKB" id="Q15070"/>
    </source>
</evidence>
<evidence type="ECO:0000255" key="2"/>
<evidence type="ECO:0000256" key="3">
    <source>
        <dbReference type="SAM" id="MobiDB-lite"/>
    </source>
</evidence>
<evidence type="ECO:0000305" key="4"/>
<gene>
    <name type="primary">Oxa1l</name>
</gene>
<name>OXA1L_MOUSE</name>